<keyword id="KW-0238">DNA-binding</keyword>
<keyword id="KW-0479">Metal-binding</keyword>
<keyword id="KW-0539">Nucleus</keyword>
<keyword id="KW-1185">Reference proteome</keyword>
<keyword id="KW-0804">Transcription</keyword>
<keyword id="KW-0805">Transcription regulation</keyword>
<keyword id="KW-0862">Zinc</keyword>
<comment type="subcellular location">
    <subcellularLocation>
        <location evidence="3">Nucleus</location>
    </subcellularLocation>
</comment>
<comment type="induction">
    <text evidence="2">Weakly cell cycle regulated, peaking in S phase.</text>
</comment>
<comment type="similarity">
    <text evidence="3">Belongs to the ASG1 family.</text>
</comment>
<protein>
    <recommendedName>
        <fullName>Putative transcriptional regulatory protein YJL206C</fullName>
    </recommendedName>
</protein>
<proteinExistence type="evidence at transcript level"/>
<accession>P39529</accession>
<accession>D6VVY8</accession>
<sequence>MTPKESGKPISCAMKKLKGKRSKILVLSRDAGTNELKPTKGRAHRACIACRKRKVRCSGNIPCRLCQTNSYECKYDRPPRNSSVFDREVSDDSSLYAQRASHEREDSKGPISSIDYKKVVETIFPPETLRQILASSSFNSQNFLDTIKTCLLQGQLNVNQVIRQSLPKDTPWHMQTSVPLPPREIALKFIQKTWDCACVLFRFYHRPTIISILDSIYEAEKHGKQYTPEQVKTQPLIYSVLAVGALFSKEDLSKDSKATREFYTDEGYRYFLEAKNSLDFSNITDIYSIQAIFMMTIFLQCSANLKACYSFIGIALRAALKEGLHRRSSIVGPTPIQDETKKRLFWSVYKLDLYMNCILGFPSGIDESDIDQEFPLDVDDENISTIGIKFQDWRTISSCGMNNKHTKLILIMSRIYKLMYSLRRKPLEEDSRTQIVSLNDQLDNWYAQLPDILKVDTIRYRQTQPPLTVSANDTSSPYTKPKKLLYLDFLLSKIVLYKPFYHYISIDPLDIPEFQFQIHMAENCIEVAKKVIQLSYEMITQNLLSGSYWFSIHTIFFSVACLKFYVYQTEKGLIRNGKVDSDIHNATQLGSEILSLLKGASNASKRTFEVLNQLFKEFNEKTSVLSEQLLNIVKLQRQESSGALVPQLQTNNNFTKCQGELHHGQQHHQTPATSLRSILNLPQGEADLKFQNTNNESHTTTAAQEEYLDKLLAEFEEFDYSINRVLPDVIDFSALIGQDSSANNQIFSSEFSSDPTVN</sequence>
<dbReference type="EMBL" id="X77688">
    <property type="protein sequence ID" value="CAA54752.1"/>
    <property type="molecule type" value="Genomic_DNA"/>
</dbReference>
<dbReference type="EMBL" id="Z49481">
    <property type="protein sequence ID" value="CAA89502.1"/>
    <property type="molecule type" value="Genomic_DNA"/>
</dbReference>
<dbReference type="EMBL" id="BK006943">
    <property type="protein sequence ID" value="DAA08604.1"/>
    <property type="molecule type" value="Genomic_DNA"/>
</dbReference>
<dbReference type="PIR" id="S46625">
    <property type="entry name" value="S46625"/>
</dbReference>
<dbReference type="RefSeq" id="NP_012329.1">
    <property type="nucleotide sequence ID" value="NM_001181638.1"/>
</dbReference>
<dbReference type="BioGRID" id="33552">
    <property type="interactions" value="92"/>
</dbReference>
<dbReference type="FunCoup" id="P39529">
    <property type="interactions" value="224"/>
</dbReference>
<dbReference type="IntAct" id="P39529">
    <property type="interactions" value="3"/>
</dbReference>
<dbReference type="STRING" id="4932.YJL206C"/>
<dbReference type="GlyGen" id="P39529">
    <property type="glycosylation" value="1 site"/>
</dbReference>
<dbReference type="iPTMnet" id="P39529"/>
<dbReference type="PaxDb" id="4932-YJL206C"/>
<dbReference type="PeptideAtlas" id="P39529"/>
<dbReference type="EnsemblFungi" id="YJL206C_mRNA">
    <property type="protein sequence ID" value="YJL206C"/>
    <property type="gene ID" value="YJL206C"/>
</dbReference>
<dbReference type="GeneID" id="853224"/>
<dbReference type="KEGG" id="sce:YJL206C"/>
<dbReference type="AGR" id="SGD:S000003741"/>
<dbReference type="SGD" id="S000003741">
    <property type="gene designation" value="YJL206C"/>
</dbReference>
<dbReference type="VEuPathDB" id="FungiDB:YJL206C"/>
<dbReference type="eggNOG" id="ENOG502QSY2">
    <property type="taxonomic scope" value="Eukaryota"/>
</dbReference>
<dbReference type="GeneTree" id="ENSGT00940000176737"/>
<dbReference type="HOGENOM" id="CLU_010084_1_1_1"/>
<dbReference type="InParanoid" id="P39529"/>
<dbReference type="OMA" id="AHWRIAY"/>
<dbReference type="OrthoDB" id="422427at2759"/>
<dbReference type="BioCyc" id="YEAST:G3O-31633-MONOMER"/>
<dbReference type="BioGRID-ORCS" id="853224">
    <property type="hits" value="3 hits in 10 CRISPR screens"/>
</dbReference>
<dbReference type="ChiTaRS" id="YJL206C">
    <property type="organism name" value="yeast"/>
</dbReference>
<dbReference type="PRO" id="PR:P39529"/>
<dbReference type="Proteomes" id="UP000002311">
    <property type="component" value="Chromosome X"/>
</dbReference>
<dbReference type="RNAct" id="P39529">
    <property type="molecule type" value="protein"/>
</dbReference>
<dbReference type="GO" id="GO:0005634">
    <property type="term" value="C:nucleus"/>
    <property type="evidence" value="ECO:0000318"/>
    <property type="project" value="GO_Central"/>
</dbReference>
<dbReference type="GO" id="GO:0003677">
    <property type="term" value="F:DNA binding"/>
    <property type="evidence" value="ECO:0007669"/>
    <property type="project" value="UniProtKB-KW"/>
</dbReference>
<dbReference type="GO" id="GO:0000981">
    <property type="term" value="F:DNA-binding transcription factor activity, RNA polymerase II-specific"/>
    <property type="evidence" value="ECO:0007669"/>
    <property type="project" value="InterPro"/>
</dbReference>
<dbReference type="GO" id="GO:0008270">
    <property type="term" value="F:zinc ion binding"/>
    <property type="evidence" value="ECO:0007669"/>
    <property type="project" value="InterPro"/>
</dbReference>
<dbReference type="GO" id="GO:0006351">
    <property type="term" value="P:DNA-templated transcription"/>
    <property type="evidence" value="ECO:0007669"/>
    <property type="project" value="InterPro"/>
</dbReference>
<dbReference type="GO" id="GO:0045944">
    <property type="term" value="P:positive regulation of transcription by RNA polymerase II"/>
    <property type="evidence" value="ECO:0000318"/>
    <property type="project" value="GO_Central"/>
</dbReference>
<dbReference type="CDD" id="cd12148">
    <property type="entry name" value="fungal_TF_MHR"/>
    <property type="match status" value="1"/>
</dbReference>
<dbReference type="CDD" id="cd00067">
    <property type="entry name" value="GAL4"/>
    <property type="match status" value="1"/>
</dbReference>
<dbReference type="FunFam" id="4.10.240.10:FF:000028">
    <property type="entry name" value="Uncharacterized transcriptional regulatory protein C1773.12"/>
    <property type="match status" value="1"/>
</dbReference>
<dbReference type="Gene3D" id="4.10.240.10">
    <property type="entry name" value="Zn(2)-C6 fungal-type DNA-binding domain"/>
    <property type="match status" value="1"/>
</dbReference>
<dbReference type="InterPro" id="IPR051711">
    <property type="entry name" value="Stress_Response_Reg"/>
</dbReference>
<dbReference type="InterPro" id="IPR007219">
    <property type="entry name" value="Transcription_factor_dom_fun"/>
</dbReference>
<dbReference type="InterPro" id="IPR036864">
    <property type="entry name" value="Zn2-C6_fun-type_DNA-bd_sf"/>
</dbReference>
<dbReference type="InterPro" id="IPR001138">
    <property type="entry name" value="Zn2Cys6_DnaBD"/>
</dbReference>
<dbReference type="PANTHER" id="PTHR47540:SF1">
    <property type="entry name" value="ACTIVATOR OF STRESS GENES 1-RELATED"/>
    <property type="match status" value="1"/>
</dbReference>
<dbReference type="PANTHER" id="PTHR47540">
    <property type="entry name" value="THIAMINE REPRESSIBLE GENES REGULATORY PROTEIN THI5"/>
    <property type="match status" value="1"/>
</dbReference>
<dbReference type="Pfam" id="PF04082">
    <property type="entry name" value="Fungal_trans"/>
    <property type="match status" value="1"/>
</dbReference>
<dbReference type="Pfam" id="PF00172">
    <property type="entry name" value="Zn_clus"/>
    <property type="match status" value="1"/>
</dbReference>
<dbReference type="SMART" id="SM00906">
    <property type="entry name" value="Fungal_trans"/>
    <property type="match status" value="1"/>
</dbReference>
<dbReference type="SMART" id="SM00066">
    <property type="entry name" value="GAL4"/>
    <property type="match status" value="1"/>
</dbReference>
<dbReference type="SUPFAM" id="SSF57701">
    <property type="entry name" value="Zn2/Cys6 DNA-binding domain"/>
    <property type="match status" value="1"/>
</dbReference>
<dbReference type="PROSITE" id="PS00463">
    <property type="entry name" value="ZN2_CY6_FUNGAL_1"/>
    <property type="match status" value="1"/>
</dbReference>
<dbReference type="PROSITE" id="PS50048">
    <property type="entry name" value="ZN2_CY6_FUNGAL_2"/>
    <property type="match status" value="1"/>
</dbReference>
<feature type="chain" id="PRO_0000114999" description="Putative transcriptional regulatory protein YJL206C">
    <location>
        <begin position="1"/>
        <end position="758"/>
    </location>
</feature>
<feature type="DNA-binding region" description="Zn(2)-C6 fungal-type" evidence="1">
    <location>
        <begin position="47"/>
        <end position="73"/>
    </location>
</feature>
<evidence type="ECO:0000255" key="1">
    <source>
        <dbReference type="PROSITE-ProRule" id="PRU00227"/>
    </source>
</evidence>
<evidence type="ECO:0000269" key="2">
    <source>
    </source>
</evidence>
<evidence type="ECO:0000305" key="3"/>
<name>YJU6_YEAST</name>
<organism>
    <name type="scientific">Saccharomyces cerevisiae (strain ATCC 204508 / S288c)</name>
    <name type="common">Baker's yeast</name>
    <dbReference type="NCBI Taxonomy" id="559292"/>
    <lineage>
        <taxon>Eukaryota</taxon>
        <taxon>Fungi</taxon>
        <taxon>Dikarya</taxon>
        <taxon>Ascomycota</taxon>
        <taxon>Saccharomycotina</taxon>
        <taxon>Saccharomycetes</taxon>
        <taxon>Saccharomycetales</taxon>
        <taxon>Saccharomycetaceae</taxon>
        <taxon>Saccharomyces</taxon>
    </lineage>
</organism>
<gene>
    <name type="ordered locus">YJL206C</name>
    <name type="ORF">J0316</name>
</gene>
<reference key="1">
    <citation type="journal article" date="1994" name="Yeast">
        <title>The sequence of a 36 kb segment on the left arm of yeast chromosome X identifies 24 open reading frames including NUC1, PRP21 (SPP91), CDC6, CRY2, the gene for S24, a homologue to the aconitase gene ACO1 and two homologues to chromosome III genes.</title>
        <authorList>
            <person name="Purnelle B."/>
            <person name="Coster F."/>
            <person name="Goffeau A."/>
        </authorList>
    </citation>
    <scope>NUCLEOTIDE SEQUENCE [GENOMIC DNA]</scope>
    <source>
        <strain>ATCC 204508 / S288c</strain>
    </source>
</reference>
<reference key="2">
    <citation type="journal article" date="1996" name="EMBO J.">
        <title>Complete nucleotide sequence of Saccharomyces cerevisiae chromosome X.</title>
        <authorList>
            <person name="Galibert F."/>
            <person name="Alexandraki D."/>
            <person name="Baur A."/>
            <person name="Boles E."/>
            <person name="Chalwatzis N."/>
            <person name="Chuat J.-C."/>
            <person name="Coster F."/>
            <person name="Cziepluch C."/>
            <person name="de Haan M."/>
            <person name="Domdey H."/>
            <person name="Durand P."/>
            <person name="Entian K.-D."/>
            <person name="Gatius M."/>
            <person name="Goffeau A."/>
            <person name="Grivell L.A."/>
            <person name="Hennemann A."/>
            <person name="Herbert C.J."/>
            <person name="Heumann K."/>
            <person name="Hilger F."/>
            <person name="Hollenberg C.P."/>
            <person name="Huang M.-E."/>
            <person name="Jacq C."/>
            <person name="Jauniaux J.-C."/>
            <person name="Katsoulou C."/>
            <person name="Kirchrath L."/>
            <person name="Kleine K."/>
            <person name="Kordes E."/>
            <person name="Koetter P."/>
            <person name="Liebl S."/>
            <person name="Louis E.J."/>
            <person name="Manus V."/>
            <person name="Mewes H.-W."/>
            <person name="Miosga T."/>
            <person name="Obermaier B."/>
            <person name="Perea J."/>
            <person name="Pohl T.M."/>
            <person name="Portetelle D."/>
            <person name="Pujol A."/>
            <person name="Purnelle B."/>
            <person name="Ramezani Rad M."/>
            <person name="Rasmussen S.W."/>
            <person name="Rose M."/>
            <person name="Rossau R."/>
            <person name="Schaaff-Gerstenschlaeger I."/>
            <person name="Smits P.H.M."/>
            <person name="Scarcez T."/>
            <person name="Soriano N."/>
            <person name="To Van D."/>
            <person name="Tzermia M."/>
            <person name="Van Broekhoven A."/>
            <person name="Vandenbol M."/>
            <person name="Wedler H."/>
            <person name="von Wettstein D."/>
            <person name="Wambutt R."/>
            <person name="Zagulski M."/>
            <person name="Zollner A."/>
            <person name="Karpfinger-Hartl L."/>
        </authorList>
    </citation>
    <scope>NUCLEOTIDE SEQUENCE [LARGE SCALE GENOMIC DNA]</scope>
    <source>
        <strain>ATCC 204508 / S288c</strain>
    </source>
</reference>
<reference key="3">
    <citation type="journal article" date="2014" name="G3 (Bethesda)">
        <title>The reference genome sequence of Saccharomyces cerevisiae: Then and now.</title>
        <authorList>
            <person name="Engel S.R."/>
            <person name="Dietrich F.S."/>
            <person name="Fisk D.G."/>
            <person name="Binkley G."/>
            <person name="Balakrishnan R."/>
            <person name="Costanzo M.C."/>
            <person name="Dwight S.S."/>
            <person name="Hitz B.C."/>
            <person name="Karra K."/>
            <person name="Nash R.S."/>
            <person name="Weng S."/>
            <person name="Wong E.D."/>
            <person name="Lloyd P."/>
            <person name="Skrzypek M.S."/>
            <person name="Miyasato S.R."/>
            <person name="Simison M."/>
            <person name="Cherry J.M."/>
        </authorList>
    </citation>
    <scope>GENOME REANNOTATION</scope>
    <source>
        <strain>ATCC 204508 / S288c</strain>
    </source>
</reference>
<reference key="4">
    <citation type="journal article" date="2005" name="Yeast">
        <title>New weakly expressed cell cycle-regulated genes in yeast.</title>
        <authorList>
            <person name="de Lichtenberg U."/>
            <person name="Wernersson R."/>
            <person name="Jensen T.S."/>
            <person name="Nielsen H.B."/>
            <person name="Fausboell A."/>
            <person name="Schmidt P."/>
            <person name="Hansen F.B."/>
            <person name="Knudsen S."/>
            <person name="Brunak S."/>
        </authorList>
    </citation>
    <scope>INDUCTION</scope>
</reference>